<reference key="1">
    <citation type="journal article" date="2007" name="Proc. Natl. Acad. Sci. U.S.A.">
        <title>Deep-sea vent epsilon-proteobacterial genomes provide insights into emergence of pathogens.</title>
        <authorList>
            <person name="Nakagawa S."/>
            <person name="Takaki Y."/>
            <person name="Shimamura S."/>
            <person name="Reysenbach A.-L."/>
            <person name="Takai K."/>
            <person name="Horikoshi K."/>
        </authorList>
    </citation>
    <scope>NUCLEOTIDE SEQUENCE [LARGE SCALE GENOMIC DNA]</scope>
    <source>
        <strain>SB155-2</strain>
    </source>
</reference>
<feature type="chain" id="PRO_1000011920" description="Diaminopimelate epimerase">
    <location>
        <begin position="1"/>
        <end position="250"/>
    </location>
</feature>
<feature type="active site" description="Proton donor" evidence="1">
    <location>
        <position position="69"/>
    </location>
</feature>
<feature type="active site" description="Proton acceptor" evidence="1">
    <location>
        <position position="192"/>
    </location>
</feature>
<feature type="binding site" evidence="1">
    <location>
        <position position="11"/>
    </location>
    <ligand>
        <name>substrate</name>
    </ligand>
</feature>
<feature type="binding site" evidence="1">
    <location>
        <position position="60"/>
    </location>
    <ligand>
        <name>substrate</name>
    </ligand>
</feature>
<feature type="binding site" evidence="1">
    <location>
        <begin position="70"/>
        <end position="71"/>
    </location>
    <ligand>
        <name>substrate</name>
    </ligand>
</feature>
<feature type="binding site" evidence="1">
    <location>
        <position position="164"/>
    </location>
    <ligand>
        <name>substrate</name>
    </ligand>
</feature>
<feature type="binding site" evidence="1">
    <location>
        <begin position="182"/>
        <end position="183"/>
    </location>
    <ligand>
        <name>substrate</name>
    </ligand>
</feature>
<feature type="binding site" evidence="1">
    <location>
        <begin position="193"/>
        <end position="194"/>
    </location>
    <ligand>
        <name>substrate</name>
    </ligand>
</feature>
<feature type="site" description="Could be important to modulate the pK values of the two catalytic cysteine residues" evidence="1">
    <location>
        <position position="138"/>
    </location>
</feature>
<feature type="site" description="Could be important to modulate the pK values of the two catalytic cysteine residues" evidence="1">
    <location>
        <position position="182"/>
    </location>
</feature>
<dbReference type="EC" id="5.1.1.7" evidence="1"/>
<dbReference type="EMBL" id="AP009178">
    <property type="protein sequence ID" value="BAF69219.1"/>
    <property type="molecule type" value="Genomic_DNA"/>
</dbReference>
<dbReference type="RefSeq" id="WP_011979645.1">
    <property type="nucleotide sequence ID" value="NC_009662.1"/>
</dbReference>
<dbReference type="SMR" id="A6Q160"/>
<dbReference type="FunCoup" id="A6Q160">
    <property type="interactions" value="527"/>
</dbReference>
<dbReference type="STRING" id="387092.NIS_0102"/>
<dbReference type="KEGG" id="nis:NIS_0102"/>
<dbReference type="eggNOG" id="COG0253">
    <property type="taxonomic scope" value="Bacteria"/>
</dbReference>
<dbReference type="HOGENOM" id="CLU_053306_3_2_7"/>
<dbReference type="InParanoid" id="A6Q160"/>
<dbReference type="OrthoDB" id="9805408at2"/>
<dbReference type="UniPathway" id="UPA00034">
    <property type="reaction ID" value="UER00025"/>
</dbReference>
<dbReference type="Proteomes" id="UP000001118">
    <property type="component" value="Chromosome"/>
</dbReference>
<dbReference type="GO" id="GO:0005829">
    <property type="term" value="C:cytosol"/>
    <property type="evidence" value="ECO:0007669"/>
    <property type="project" value="TreeGrafter"/>
</dbReference>
<dbReference type="GO" id="GO:0008837">
    <property type="term" value="F:diaminopimelate epimerase activity"/>
    <property type="evidence" value="ECO:0007669"/>
    <property type="project" value="UniProtKB-UniRule"/>
</dbReference>
<dbReference type="GO" id="GO:0009089">
    <property type="term" value="P:lysine biosynthetic process via diaminopimelate"/>
    <property type="evidence" value="ECO:0007669"/>
    <property type="project" value="UniProtKB-UniRule"/>
</dbReference>
<dbReference type="Gene3D" id="3.10.310.10">
    <property type="entry name" value="Diaminopimelate Epimerase, Chain A, domain 1"/>
    <property type="match status" value="2"/>
</dbReference>
<dbReference type="HAMAP" id="MF_00197">
    <property type="entry name" value="DAP_epimerase"/>
    <property type="match status" value="1"/>
</dbReference>
<dbReference type="InterPro" id="IPR018510">
    <property type="entry name" value="DAP_epimerase_AS"/>
</dbReference>
<dbReference type="InterPro" id="IPR001653">
    <property type="entry name" value="DAP_epimerase_DapF"/>
</dbReference>
<dbReference type="NCBIfam" id="TIGR00652">
    <property type="entry name" value="DapF"/>
    <property type="match status" value="1"/>
</dbReference>
<dbReference type="PANTHER" id="PTHR31689:SF0">
    <property type="entry name" value="DIAMINOPIMELATE EPIMERASE"/>
    <property type="match status" value="1"/>
</dbReference>
<dbReference type="PANTHER" id="PTHR31689">
    <property type="entry name" value="DIAMINOPIMELATE EPIMERASE, CHLOROPLASTIC"/>
    <property type="match status" value="1"/>
</dbReference>
<dbReference type="Pfam" id="PF01678">
    <property type="entry name" value="DAP_epimerase"/>
    <property type="match status" value="2"/>
</dbReference>
<dbReference type="SUPFAM" id="SSF54506">
    <property type="entry name" value="Diaminopimelate epimerase-like"/>
    <property type="match status" value="2"/>
</dbReference>
<dbReference type="PROSITE" id="PS01326">
    <property type="entry name" value="DAP_EPIMERASE"/>
    <property type="match status" value="1"/>
</dbReference>
<sequence length="250" mass="28476">MQLVKYSASGNDFVIYHTFVKKDRSELAKLLCHRHEGIGADGLIVLLPHSRYDFEWQFYNADGSEAEMCGNGSRAAAHYAYSYGLASKQMRFLTLAGVIEASVEADVVESQLTKPKILDRKIEENGKRWWLIDTGVPHLVTFVEDLNQFDKNESKRLRNKYNANVNYGIIRDLENVGVRTYERGVEDETLACGTGMAATFLRAFEEGVVNPTVTVVPKSGEELQLRYENEKLFFKGRVKKVFETFKEGIW</sequence>
<name>DAPF_NITSB</name>
<proteinExistence type="inferred from homology"/>
<keyword id="KW-0028">Amino-acid biosynthesis</keyword>
<keyword id="KW-0963">Cytoplasm</keyword>
<keyword id="KW-0413">Isomerase</keyword>
<keyword id="KW-0457">Lysine biosynthesis</keyword>
<keyword id="KW-1185">Reference proteome</keyword>
<organism>
    <name type="scientific">Nitratiruptor sp. (strain SB155-2)</name>
    <dbReference type="NCBI Taxonomy" id="387092"/>
    <lineage>
        <taxon>Bacteria</taxon>
        <taxon>Pseudomonadati</taxon>
        <taxon>Campylobacterota</taxon>
        <taxon>Epsilonproteobacteria</taxon>
        <taxon>Nautiliales</taxon>
        <taxon>Nitratiruptoraceae</taxon>
        <taxon>Nitratiruptor</taxon>
    </lineage>
</organism>
<accession>A6Q160</accession>
<protein>
    <recommendedName>
        <fullName evidence="1">Diaminopimelate epimerase</fullName>
        <shortName evidence="1">DAP epimerase</shortName>
        <ecNumber evidence="1">5.1.1.7</ecNumber>
    </recommendedName>
    <alternativeName>
        <fullName evidence="1">PLP-independent amino acid racemase</fullName>
    </alternativeName>
</protein>
<evidence type="ECO:0000255" key="1">
    <source>
        <dbReference type="HAMAP-Rule" id="MF_00197"/>
    </source>
</evidence>
<gene>
    <name evidence="1" type="primary">dapF</name>
    <name type="ordered locus">NIS_0102</name>
</gene>
<comment type="function">
    <text evidence="1">Catalyzes the stereoinversion of LL-2,6-diaminopimelate (L,L-DAP) to meso-diaminopimelate (meso-DAP), a precursor of L-lysine and an essential component of the bacterial peptidoglycan.</text>
</comment>
<comment type="catalytic activity">
    <reaction evidence="1">
        <text>(2S,6S)-2,6-diaminopimelate = meso-2,6-diaminopimelate</text>
        <dbReference type="Rhea" id="RHEA:15393"/>
        <dbReference type="ChEBI" id="CHEBI:57609"/>
        <dbReference type="ChEBI" id="CHEBI:57791"/>
        <dbReference type="EC" id="5.1.1.7"/>
    </reaction>
</comment>
<comment type="pathway">
    <text evidence="1">Amino-acid biosynthesis; L-lysine biosynthesis via DAP pathway; DL-2,6-diaminopimelate from LL-2,6-diaminopimelate: step 1/1.</text>
</comment>
<comment type="subunit">
    <text evidence="1">Homodimer.</text>
</comment>
<comment type="subcellular location">
    <subcellularLocation>
        <location evidence="1">Cytoplasm</location>
    </subcellularLocation>
</comment>
<comment type="similarity">
    <text evidence="1">Belongs to the diaminopimelate epimerase family.</text>
</comment>